<proteinExistence type="inferred from homology"/>
<feature type="chain" id="PRO_0000173235" description="Large ribosomal subunit protein bL31B">
    <location>
        <begin position="1"/>
        <end position="81"/>
    </location>
</feature>
<gene>
    <name evidence="1" type="primary">rpmE2</name>
    <name type="synonym">rpmE</name>
    <name type="ordered locus">LMOf2365_2521</name>
</gene>
<accession>Q71WN0</accession>
<dbReference type="EMBL" id="AE017262">
    <property type="protein sequence ID" value="AAT05286.1"/>
    <property type="molecule type" value="Genomic_DNA"/>
</dbReference>
<dbReference type="RefSeq" id="WP_003726356.1">
    <property type="nucleotide sequence ID" value="NC_002973.6"/>
</dbReference>
<dbReference type="SMR" id="Q71WN0"/>
<dbReference type="KEGG" id="lmf:LMOf2365_2521"/>
<dbReference type="HOGENOM" id="CLU_114306_2_2_9"/>
<dbReference type="GO" id="GO:1990904">
    <property type="term" value="C:ribonucleoprotein complex"/>
    <property type="evidence" value="ECO:0007669"/>
    <property type="project" value="UniProtKB-KW"/>
</dbReference>
<dbReference type="GO" id="GO:0005840">
    <property type="term" value="C:ribosome"/>
    <property type="evidence" value="ECO:0007669"/>
    <property type="project" value="UniProtKB-KW"/>
</dbReference>
<dbReference type="GO" id="GO:0003735">
    <property type="term" value="F:structural constituent of ribosome"/>
    <property type="evidence" value="ECO:0007669"/>
    <property type="project" value="InterPro"/>
</dbReference>
<dbReference type="GO" id="GO:0006412">
    <property type="term" value="P:translation"/>
    <property type="evidence" value="ECO:0007669"/>
    <property type="project" value="UniProtKB-UniRule"/>
</dbReference>
<dbReference type="Gene3D" id="4.10.830.30">
    <property type="entry name" value="Ribosomal protein L31"/>
    <property type="match status" value="1"/>
</dbReference>
<dbReference type="HAMAP" id="MF_00502">
    <property type="entry name" value="Ribosomal_bL31_2"/>
    <property type="match status" value="1"/>
</dbReference>
<dbReference type="InterPro" id="IPR034704">
    <property type="entry name" value="Ribosomal_bL28/bL31-like_sf"/>
</dbReference>
<dbReference type="InterPro" id="IPR002150">
    <property type="entry name" value="Ribosomal_bL31"/>
</dbReference>
<dbReference type="InterPro" id="IPR027493">
    <property type="entry name" value="Ribosomal_bL31_B"/>
</dbReference>
<dbReference type="InterPro" id="IPR042105">
    <property type="entry name" value="Ribosomal_bL31_sf"/>
</dbReference>
<dbReference type="NCBIfam" id="TIGR00105">
    <property type="entry name" value="L31"/>
    <property type="match status" value="1"/>
</dbReference>
<dbReference type="NCBIfam" id="NF002462">
    <property type="entry name" value="PRK01678.1"/>
    <property type="match status" value="1"/>
</dbReference>
<dbReference type="PANTHER" id="PTHR33280">
    <property type="entry name" value="50S RIBOSOMAL PROTEIN L31, CHLOROPLASTIC"/>
    <property type="match status" value="1"/>
</dbReference>
<dbReference type="PANTHER" id="PTHR33280:SF1">
    <property type="entry name" value="LARGE RIBOSOMAL SUBUNIT PROTEIN BL31C"/>
    <property type="match status" value="1"/>
</dbReference>
<dbReference type="Pfam" id="PF01197">
    <property type="entry name" value="Ribosomal_L31"/>
    <property type="match status" value="1"/>
</dbReference>
<dbReference type="PRINTS" id="PR01249">
    <property type="entry name" value="RIBOSOMALL31"/>
</dbReference>
<dbReference type="SUPFAM" id="SSF143800">
    <property type="entry name" value="L28p-like"/>
    <property type="match status" value="1"/>
</dbReference>
<dbReference type="PROSITE" id="PS01143">
    <property type="entry name" value="RIBOSOMAL_L31"/>
    <property type="match status" value="1"/>
</dbReference>
<keyword id="KW-0687">Ribonucleoprotein</keyword>
<keyword id="KW-0689">Ribosomal protein</keyword>
<comment type="subunit">
    <text evidence="1">Part of the 50S ribosomal subunit.</text>
</comment>
<comment type="similarity">
    <text evidence="1">Belongs to the bacterial ribosomal protein bL31 family. Type B subfamily.</text>
</comment>
<sequence length="81" mass="9258">MKTGIHPEYRPVVFVDTSTDFKFLSGSTKSSSETIKWEDGNEYPLLRVEISSDSHPFYTGKQKHATADGRVDRFNKKYGLK</sequence>
<evidence type="ECO:0000255" key="1">
    <source>
        <dbReference type="HAMAP-Rule" id="MF_00502"/>
    </source>
</evidence>
<evidence type="ECO:0000305" key="2"/>
<protein>
    <recommendedName>
        <fullName evidence="1">Large ribosomal subunit protein bL31B</fullName>
    </recommendedName>
    <alternativeName>
        <fullName evidence="2">50S ribosomal protein L31 type B</fullName>
    </alternativeName>
</protein>
<organism>
    <name type="scientific">Listeria monocytogenes serotype 4b (strain F2365)</name>
    <dbReference type="NCBI Taxonomy" id="265669"/>
    <lineage>
        <taxon>Bacteria</taxon>
        <taxon>Bacillati</taxon>
        <taxon>Bacillota</taxon>
        <taxon>Bacilli</taxon>
        <taxon>Bacillales</taxon>
        <taxon>Listeriaceae</taxon>
        <taxon>Listeria</taxon>
    </lineage>
</organism>
<name>RL31B_LISMF</name>
<reference key="1">
    <citation type="journal article" date="2004" name="Nucleic Acids Res.">
        <title>Whole genome comparisons of serotype 4b and 1/2a strains of the food-borne pathogen Listeria monocytogenes reveal new insights into the core genome components of this species.</title>
        <authorList>
            <person name="Nelson K.E."/>
            <person name="Fouts D.E."/>
            <person name="Mongodin E.F."/>
            <person name="Ravel J."/>
            <person name="DeBoy R.T."/>
            <person name="Kolonay J.F."/>
            <person name="Rasko D.A."/>
            <person name="Angiuoli S.V."/>
            <person name="Gill S.R."/>
            <person name="Paulsen I.T."/>
            <person name="Peterson J.D."/>
            <person name="White O."/>
            <person name="Nelson W.C."/>
            <person name="Nierman W.C."/>
            <person name="Beanan M.J."/>
            <person name="Brinkac L.M."/>
            <person name="Daugherty S.C."/>
            <person name="Dodson R.J."/>
            <person name="Durkin A.S."/>
            <person name="Madupu R."/>
            <person name="Haft D.H."/>
            <person name="Selengut J."/>
            <person name="Van Aken S.E."/>
            <person name="Khouri H.M."/>
            <person name="Fedorova N."/>
            <person name="Forberger H.A."/>
            <person name="Tran B."/>
            <person name="Kathariou S."/>
            <person name="Wonderling L.D."/>
            <person name="Uhlich G.A."/>
            <person name="Bayles D.O."/>
            <person name="Luchansky J.B."/>
            <person name="Fraser C.M."/>
        </authorList>
    </citation>
    <scope>NUCLEOTIDE SEQUENCE [LARGE SCALE GENOMIC DNA]</scope>
    <source>
        <strain>F2365</strain>
    </source>
</reference>